<organism>
    <name type="scientific">Paracidovorax citrulli (strain AAC00-1)</name>
    <name type="common">Acidovorax citrulli</name>
    <dbReference type="NCBI Taxonomy" id="397945"/>
    <lineage>
        <taxon>Bacteria</taxon>
        <taxon>Pseudomonadati</taxon>
        <taxon>Pseudomonadota</taxon>
        <taxon>Betaproteobacteria</taxon>
        <taxon>Burkholderiales</taxon>
        <taxon>Comamonadaceae</taxon>
        <taxon>Paracidovorax</taxon>
    </lineage>
</organism>
<sequence>MASNFLTKLFGSRNDRLLKQYRKTVARINAMEPEYEKLSDDALRAKTVEFQGRVARGESLDDLLPEAFAVGREASKRVMKMRHFDVQLLGGMALHHGKISEMRTGEGKTLTATLPVYLNALGGKGVHVVTVNDYLANRDARWMGRLYNFLGLTVGINLPQMPREEKQAAYAADITYGTNNEYGFDYLRDNMVYEARDRVQRALNFAIVDEVDSILIDEARTPLIISGQAEDHTAMYIAMNKVVPLLVRQEGEADPRTGEGVTKPGDFTIDEKSHQVFLTEQGHETAERVLAAQGLIPEGASLYDPSHITLMHHLYAALRANHLYHRDQHYVVQNGEIVIVDEFTGRLMSGRRWSEGLHQAVEAKEGVEIQAENQTLASITFQNYFRLYSKLSGMTGTADTEAYEFQEIYGLETVVIPPNRPSKRDDQLDRVYKTTREKYEAAIQDIRECHERGQPVLVGTTSIENSEIIDDLLNKAGLPHQVLNAKQHAREADIVAQAGRAGMITIATNMAGRGTDIVLGGNIEKEVAAIEDDESLDEATKQARIAALREQWAADNEKVKALGGLRIIATERHESRRIDNQLRGRSGRQGDPGSSRFYLSLDDSLMRIFAGERVRAIMERLKMPDGEAIEAGIVTRSIESAQRKVEARNFDIRKQLLEYDDVANDQRKVIYQQRNEILDAADLSGVIAGMRESCLTDIVRQYVPEESVEEQWDLAGLEKALADEWQIRLPLQQEVESAQAITDGEILEKVVAAGNAAFQAKVDMVGPENFHQFQRAVLLQSFDSNWRDHLSALDYLRQGIHLRGYAQKQPKQEYKREAFELFRQLIDQVKNEVTRILLTVQVQSPSELDQAAEALESRAEQIANVTYTAPTETGEPETLPDPRTAGAGGDGLNLPEGVRIGRNDPCPCGSGKKYKQCHGKLA</sequence>
<protein>
    <recommendedName>
        <fullName evidence="1">Protein translocase subunit SecA</fullName>
        <ecNumber evidence="1">7.4.2.8</ecNumber>
    </recommendedName>
</protein>
<reference key="1">
    <citation type="submission" date="2006-12" db="EMBL/GenBank/DDBJ databases">
        <title>Complete sequence of Acidovorax avenae subsp. citrulli AAC00-1.</title>
        <authorList>
            <person name="Copeland A."/>
            <person name="Lucas S."/>
            <person name="Lapidus A."/>
            <person name="Barry K."/>
            <person name="Detter J.C."/>
            <person name="Glavina del Rio T."/>
            <person name="Dalin E."/>
            <person name="Tice H."/>
            <person name="Pitluck S."/>
            <person name="Kiss H."/>
            <person name="Brettin T."/>
            <person name="Bruce D."/>
            <person name="Han C."/>
            <person name="Tapia R."/>
            <person name="Gilna P."/>
            <person name="Schmutz J."/>
            <person name="Larimer F."/>
            <person name="Land M."/>
            <person name="Hauser L."/>
            <person name="Kyrpides N."/>
            <person name="Kim E."/>
            <person name="Stahl D."/>
            <person name="Richardson P."/>
        </authorList>
    </citation>
    <scope>NUCLEOTIDE SEQUENCE [LARGE SCALE GENOMIC DNA]</scope>
    <source>
        <strain>AAC00-1</strain>
    </source>
</reference>
<evidence type="ECO:0000255" key="1">
    <source>
        <dbReference type="HAMAP-Rule" id="MF_01382"/>
    </source>
</evidence>
<evidence type="ECO:0000256" key="2">
    <source>
        <dbReference type="SAM" id="MobiDB-lite"/>
    </source>
</evidence>
<keyword id="KW-0067">ATP-binding</keyword>
<keyword id="KW-0997">Cell inner membrane</keyword>
<keyword id="KW-1003">Cell membrane</keyword>
<keyword id="KW-0963">Cytoplasm</keyword>
<keyword id="KW-0472">Membrane</keyword>
<keyword id="KW-0479">Metal-binding</keyword>
<keyword id="KW-0547">Nucleotide-binding</keyword>
<keyword id="KW-0653">Protein transport</keyword>
<keyword id="KW-1278">Translocase</keyword>
<keyword id="KW-0811">Translocation</keyword>
<keyword id="KW-0813">Transport</keyword>
<keyword id="KW-0862">Zinc</keyword>
<proteinExistence type="inferred from homology"/>
<accession>A1TTE9</accession>
<name>SECA_PARC0</name>
<gene>
    <name evidence="1" type="primary">secA</name>
    <name type="ordered locus">Aave_3689</name>
</gene>
<comment type="function">
    <text evidence="1">Part of the Sec protein translocase complex. Interacts with the SecYEG preprotein conducting channel. Has a central role in coupling the hydrolysis of ATP to the transfer of proteins into and across the cell membrane, serving both as a receptor for the preprotein-SecB complex and as an ATP-driven molecular motor driving the stepwise translocation of polypeptide chains across the membrane.</text>
</comment>
<comment type="catalytic activity">
    <reaction evidence="1">
        <text>ATP + H2O + cellular proteinSide 1 = ADP + phosphate + cellular proteinSide 2.</text>
        <dbReference type="EC" id="7.4.2.8"/>
    </reaction>
</comment>
<comment type="cofactor">
    <cofactor evidence="1">
        <name>Zn(2+)</name>
        <dbReference type="ChEBI" id="CHEBI:29105"/>
    </cofactor>
    <text evidence="1">May bind 1 zinc ion per subunit.</text>
</comment>
<comment type="subunit">
    <text evidence="1">Monomer and homodimer. Part of the essential Sec protein translocation apparatus which comprises SecA, SecYEG and auxiliary proteins SecDF-YajC and YidC.</text>
</comment>
<comment type="subcellular location">
    <subcellularLocation>
        <location evidence="1">Cell inner membrane</location>
        <topology evidence="1">Peripheral membrane protein</topology>
        <orientation evidence="1">Cytoplasmic side</orientation>
    </subcellularLocation>
    <subcellularLocation>
        <location evidence="1">Cytoplasm</location>
    </subcellularLocation>
    <text evidence="1">Distribution is 50-50.</text>
</comment>
<comment type="similarity">
    <text evidence="1">Belongs to the SecA family.</text>
</comment>
<dbReference type="EC" id="7.4.2.8" evidence="1"/>
<dbReference type="EMBL" id="CP000512">
    <property type="protein sequence ID" value="ABM34237.1"/>
    <property type="molecule type" value="Genomic_DNA"/>
</dbReference>
<dbReference type="RefSeq" id="WP_011796731.1">
    <property type="nucleotide sequence ID" value="NC_008752.1"/>
</dbReference>
<dbReference type="SMR" id="A1TTE9"/>
<dbReference type="STRING" id="397945.Aave_3689"/>
<dbReference type="KEGG" id="aav:Aave_3689"/>
<dbReference type="eggNOG" id="COG0653">
    <property type="taxonomic scope" value="Bacteria"/>
</dbReference>
<dbReference type="HOGENOM" id="CLU_005314_3_0_4"/>
<dbReference type="OrthoDB" id="9805579at2"/>
<dbReference type="Proteomes" id="UP000002596">
    <property type="component" value="Chromosome"/>
</dbReference>
<dbReference type="GO" id="GO:0031522">
    <property type="term" value="C:cell envelope Sec protein transport complex"/>
    <property type="evidence" value="ECO:0007669"/>
    <property type="project" value="TreeGrafter"/>
</dbReference>
<dbReference type="GO" id="GO:0005829">
    <property type="term" value="C:cytosol"/>
    <property type="evidence" value="ECO:0007669"/>
    <property type="project" value="TreeGrafter"/>
</dbReference>
<dbReference type="GO" id="GO:0005886">
    <property type="term" value="C:plasma membrane"/>
    <property type="evidence" value="ECO:0007669"/>
    <property type="project" value="UniProtKB-SubCell"/>
</dbReference>
<dbReference type="GO" id="GO:0005524">
    <property type="term" value="F:ATP binding"/>
    <property type="evidence" value="ECO:0007669"/>
    <property type="project" value="UniProtKB-UniRule"/>
</dbReference>
<dbReference type="GO" id="GO:0046872">
    <property type="term" value="F:metal ion binding"/>
    <property type="evidence" value="ECO:0007669"/>
    <property type="project" value="UniProtKB-KW"/>
</dbReference>
<dbReference type="GO" id="GO:0008564">
    <property type="term" value="F:protein-exporting ATPase activity"/>
    <property type="evidence" value="ECO:0007669"/>
    <property type="project" value="UniProtKB-EC"/>
</dbReference>
<dbReference type="GO" id="GO:0065002">
    <property type="term" value="P:intracellular protein transmembrane transport"/>
    <property type="evidence" value="ECO:0007669"/>
    <property type="project" value="UniProtKB-UniRule"/>
</dbReference>
<dbReference type="GO" id="GO:0017038">
    <property type="term" value="P:protein import"/>
    <property type="evidence" value="ECO:0007669"/>
    <property type="project" value="InterPro"/>
</dbReference>
<dbReference type="GO" id="GO:0006605">
    <property type="term" value="P:protein targeting"/>
    <property type="evidence" value="ECO:0007669"/>
    <property type="project" value="UniProtKB-UniRule"/>
</dbReference>
<dbReference type="GO" id="GO:0043952">
    <property type="term" value="P:protein transport by the Sec complex"/>
    <property type="evidence" value="ECO:0007669"/>
    <property type="project" value="TreeGrafter"/>
</dbReference>
<dbReference type="CDD" id="cd17928">
    <property type="entry name" value="DEXDc_SecA"/>
    <property type="match status" value="1"/>
</dbReference>
<dbReference type="CDD" id="cd18803">
    <property type="entry name" value="SF2_C_secA"/>
    <property type="match status" value="1"/>
</dbReference>
<dbReference type="FunFam" id="3.40.50.300:FF:000081">
    <property type="entry name" value="Preprotein translocase subunit SecA"/>
    <property type="match status" value="1"/>
</dbReference>
<dbReference type="FunFam" id="3.40.50.300:FF:000113">
    <property type="entry name" value="Preprotein translocase subunit SecA"/>
    <property type="match status" value="1"/>
</dbReference>
<dbReference type="FunFam" id="3.90.1440.10:FF:000001">
    <property type="entry name" value="Preprotein translocase subunit SecA"/>
    <property type="match status" value="1"/>
</dbReference>
<dbReference type="FunFam" id="1.10.3060.10:FF:000003">
    <property type="entry name" value="Protein translocase subunit SecA"/>
    <property type="match status" value="1"/>
</dbReference>
<dbReference type="Gene3D" id="1.10.3060.10">
    <property type="entry name" value="Helical scaffold and wing domains of SecA"/>
    <property type="match status" value="1"/>
</dbReference>
<dbReference type="Gene3D" id="3.40.50.300">
    <property type="entry name" value="P-loop containing nucleotide triphosphate hydrolases"/>
    <property type="match status" value="2"/>
</dbReference>
<dbReference type="Gene3D" id="3.90.1440.10">
    <property type="entry name" value="SecA, preprotein cross-linking domain"/>
    <property type="match status" value="1"/>
</dbReference>
<dbReference type="HAMAP" id="MF_01382">
    <property type="entry name" value="SecA"/>
    <property type="match status" value="1"/>
</dbReference>
<dbReference type="InterPro" id="IPR014001">
    <property type="entry name" value="Helicase_ATP-bd"/>
</dbReference>
<dbReference type="InterPro" id="IPR001650">
    <property type="entry name" value="Helicase_C-like"/>
</dbReference>
<dbReference type="InterPro" id="IPR027417">
    <property type="entry name" value="P-loop_NTPase"/>
</dbReference>
<dbReference type="InterPro" id="IPR004027">
    <property type="entry name" value="SEC_C_motif"/>
</dbReference>
<dbReference type="InterPro" id="IPR000185">
    <property type="entry name" value="SecA"/>
</dbReference>
<dbReference type="InterPro" id="IPR020937">
    <property type="entry name" value="SecA_CS"/>
</dbReference>
<dbReference type="InterPro" id="IPR011115">
    <property type="entry name" value="SecA_DEAD"/>
</dbReference>
<dbReference type="InterPro" id="IPR014018">
    <property type="entry name" value="SecA_motor_DEAD"/>
</dbReference>
<dbReference type="InterPro" id="IPR011130">
    <property type="entry name" value="SecA_preprotein_X-link_dom"/>
</dbReference>
<dbReference type="InterPro" id="IPR044722">
    <property type="entry name" value="SecA_SF2_C"/>
</dbReference>
<dbReference type="InterPro" id="IPR011116">
    <property type="entry name" value="SecA_Wing/Scaffold"/>
</dbReference>
<dbReference type="InterPro" id="IPR036266">
    <property type="entry name" value="SecA_Wing/Scaffold_sf"/>
</dbReference>
<dbReference type="InterPro" id="IPR036670">
    <property type="entry name" value="SecA_X-link_sf"/>
</dbReference>
<dbReference type="NCBIfam" id="NF009538">
    <property type="entry name" value="PRK12904.1"/>
    <property type="match status" value="1"/>
</dbReference>
<dbReference type="NCBIfam" id="TIGR00963">
    <property type="entry name" value="secA"/>
    <property type="match status" value="1"/>
</dbReference>
<dbReference type="PANTHER" id="PTHR30612:SF0">
    <property type="entry name" value="CHLOROPLAST PROTEIN-TRANSPORTING ATPASE"/>
    <property type="match status" value="1"/>
</dbReference>
<dbReference type="PANTHER" id="PTHR30612">
    <property type="entry name" value="SECA INNER MEMBRANE COMPONENT OF SEC PROTEIN SECRETION SYSTEM"/>
    <property type="match status" value="1"/>
</dbReference>
<dbReference type="Pfam" id="PF21090">
    <property type="entry name" value="P-loop_SecA"/>
    <property type="match status" value="1"/>
</dbReference>
<dbReference type="Pfam" id="PF02810">
    <property type="entry name" value="SEC-C"/>
    <property type="match status" value="1"/>
</dbReference>
<dbReference type="Pfam" id="PF07517">
    <property type="entry name" value="SecA_DEAD"/>
    <property type="match status" value="1"/>
</dbReference>
<dbReference type="Pfam" id="PF01043">
    <property type="entry name" value="SecA_PP_bind"/>
    <property type="match status" value="1"/>
</dbReference>
<dbReference type="Pfam" id="PF07516">
    <property type="entry name" value="SecA_SW"/>
    <property type="match status" value="1"/>
</dbReference>
<dbReference type="PRINTS" id="PR00906">
    <property type="entry name" value="SECA"/>
</dbReference>
<dbReference type="SMART" id="SM00957">
    <property type="entry name" value="SecA_DEAD"/>
    <property type="match status" value="1"/>
</dbReference>
<dbReference type="SMART" id="SM00958">
    <property type="entry name" value="SecA_PP_bind"/>
    <property type="match status" value="1"/>
</dbReference>
<dbReference type="SUPFAM" id="SSF81886">
    <property type="entry name" value="Helical scaffold and wing domains of SecA"/>
    <property type="match status" value="1"/>
</dbReference>
<dbReference type="SUPFAM" id="SSF52540">
    <property type="entry name" value="P-loop containing nucleoside triphosphate hydrolases"/>
    <property type="match status" value="2"/>
</dbReference>
<dbReference type="SUPFAM" id="SSF81767">
    <property type="entry name" value="Pre-protein crosslinking domain of SecA"/>
    <property type="match status" value="1"/>
</dbReference>
<dbReference type="PROSITE" id="PS01312">
    <property type="entry name" value="SECA"/>
    <property type="match status" value="1"/>
</dbReference>
<dbReference type="PROSITE" id="PS51196">
    <property type="entry name" value="SECA_MOTOR_DEAD"/>
    <property type="match status" value="1"/>
</dbReference>
<feature type="chain" id="PRO_0000320709" description="Protein translocase subunit SecA">
    <location>
        <begin position="1"/>
        <end position="922"/>
    </location>
</feature>
<feature type="region of interest" description="Disordered" evidence="2">
    <location>
        <begin position="867"/>
        <end position="912"/>
    </location>
</feature>
<feature type="binding site" evidence="1">
    <location>
        <position position="87"/>
    </location>
    <ligand>
        <name>ATP</name>
        <dbReference type="ChEBI" id="CHEBI:30616"/>
    </ligand>
</feature>
<feature type="binding site" evidence="1">
    <location>
        <begin position="105"/>
        <end position="109"/>
    </location>
    <ligand>
        <name>ATP</name>
        <dbReference type="ChEBI" id="CHEBI:30616"/>
    </ligand>
</feature>
<feature type="binding site" evidence="1">
    <location>
        <position position="516"/>
    </location>
    <ligand>
        <name>ATP</name>
        <dbReference type="ChEBI" id="CHEBI:30616"/>
    </ligand>
</feature>
<feature type="binding site" evidence="1">
    <location>
        <position position="906"/>
    </location>
    <ligand>
        <name>Zn(2+)</name>
        <dbReference type="ChEBI" id="CHEBI:29105"/>
    </ligand>
</feature>
<feature type="binding site" evidence="1">
    <location>
        <position position="908"/>
    </location>
    <ligand>
        <name>Zn(2+)</name>
        <dbReference type="ChEBI" id="CHEBI:29105"/>
    </ligand>
</feature>
<feature type="binding site" evidence="1">
    <location>
        <position position="917"/>
    </location>
    <ligand>
        <name>Zn(2+)</name>
        <dbReference type="ChEBI" id="CHEBI:29105"/>
    </ligand>
</feature>
<feature type="binding site" evidence="1">
    <location>
        <position position="918"/>
    </location>
    <ligand>
        <name>Zn(2+)</name>
        <dbReference type="ChEBI" id="CHEBI:29105"/>
    </ligand>
</feature>